<feature type="signal peptide" evidence="1">
    <location>
        <begin position="1"/>
        <end position="21"/>
    </location>
</feature>
<feature type="chain" id="PRO_0000034763" description="Heme/hemopexin utilization protein C">
    <location>
        <begin position="22"/>
        <end position="725"/>
    </location>
</feature>
<feature type="domain" description="TBDR plug" evidence="2">
    <location>
        <begin position="36"/>
        <end position="147"/>
    </location>
</feature>
<feature type="domain" description="TBDR beta-barrel" evidence="2">
    <location>
        <begin position="158"/>
        <end position="725"/>
    </location>
</feature>
<feature type="short sequence motif" description="TonB C-terminal box">
    <location>
        <begin position="708"/>
        <end position="725"/>
    </location>
</feature>
<dbReference type="EMBL" id="U09840">
    <property type="protein sequence ID" value="AAA87059.1"/>
    <property type="molecule type" value="Genomic_DNA"/>
</dbReference>
<dbReference type="PIR" id="A57148">
    <property type="entry name" value="A57148"/>
</dbReference>
<dbReference type="SMR" id="P45357"/>
<dbReference type="GO" id="GO:0009279">
    <property type="term" value="C:cell outer membrane"/>
    <property type="evidence" value="ECO:0007669"/>
    <property type="project" value="UniProtKB-SubCell"/>
</dbReference>
<dbReference type="GO" id="GO:0015232">
    <property type="term" value="F:heme transmembrane transporter activity"/>
    <property type="evidence" value="ECO:0007669"/>
    <property type="project" value="InterPro"/>
</dbReference>
<dbReference type="GO" id="GO:0015344">
    <property type="term" value="F:siderophore uptake transmembrane transporter activity"/>
    <property type="evidence" value="ECO:0007669"/>
    <property type="project" value="TreeGrafter"/>
</dbReference>
<dbReference type="CDD" id="cd01347">
    <property type="entry name" value="ligand_gated_channel"/>
    <property type="match status" value="1"/>
</dbReference>
<dbReference type="Gene3D" id="2.40.170.20">
    <property type="entry name" value="TonB-dependent receptor, beta-barrel domain"/>
    <property type="match status" value="1"/>
</dbReference>
<dbReference type="Gene3D" id="2.170.130.10">
    <property type="entry name" value="TonB-dependent receptor, plug domain"/>
    <property type="match status" value="1"/>
</dbReference>
<dbReference type="InterPro" id="IPR012910">
    <property type="entry name" value="Plug_dom"/>
</dbReference>
<dbReference type="InterPro" id="IPR037066">
    <property type="entry name" value="Plug_dom_sf"/>
</dbReference>
<dbReference type="InterPro" id="IPR039426">
    <property type="entry name" value="TonB-dep_rcpt-like"/>
</dbReference>
<dbReference type="InterPro" id="IPR000531">
    <property type="entry name" value="TonB-dep_rcpt_b-brl"/>
</dbReference>
<dbReference type="InterPro" id="IPR011276">
    <property type="entry name" value="TonB_haem/Hb_rcpt"/>
</dbReference>
<dbReference type="InterPro" id="IPR010949">
    <property type="entry name" value="TonB_Hb/transfer/lactofer_rcpt"/>
</dbReference>
<dbReference type="InterPro" id="IPR036942">
    <property type="entry name" value="TonB_rcpt_b-brl_sf"/>
</dbReference>
<dbReference type="InterPro" id="IPR010917">
    <property type="entry name" value="TonB_rcpt_CS"/>
</dbReference>
<dbReference type="NCBIfam" id="TIGR01785">
    <property type="entry name" value="TonB-hemin"/>
    <property type="match status" value="1"/>
</dbReference>
<dbReference type="NCBIfam" id="TIGR01786">
    <property type="entry name" value="TonB-hemlactrns"/>
    <property type="match status" value="1"/>
</dbReference>
<dbReference type="PANTHER" id="PTHR30069:SF41">
    <property type="entry name" value="HEME_HEMOPEXIN UTILIZATION PROTEIN C"/>
    <property type="match status" value="1"/>
</dbReference>
<dbReference type="PANTHER" id="PTHR30069">
    <property type="entry name" value="TONB-DEPENDENT OUTER MEMBRANE RECEPTOR"/>
    <property type="match status" value="1"/>
</dbReference>
<dbReference type="Pfam" id="PF07715">
    <property type="entry name" value="Plug"/>
    <property type="match status" value="1"/>
</dbReference>
<dbReference type="Pfam" id="PF00593">
    <property type="entry name" value="TonB_dep_Rec_b-barrel"/>
    <property type="match status" value="1"/>
</dbReference>
<dbReference type="SUPFAM" id="SSF56935">
    <property type="entry name" value="Porins"/>
    <property type="match status" value="1"/>
</dbReference>
<dbReference type="PROSITE" id="PS01156">
    <property type="entry name" value="TONB_DEPENDENT_REC_2"/>
    <property type="match status" value="1"/>
</dbReference>
<dbReference type="PROSITE" id="PS52016">
    <property type="entry name" value="TONB_DEPENDENT_REC_3"/>
    <property type="match status" value="1"/>
</dbReference>
<accession>P45357</accession>
<sequence>MRFSKLSLAIATTLVTANALAQSVELDSINVIATRDPSRFAYTPEKQSKDSLLSKQATSVAAALEDIPNVDIRGGSRSIAQKPNIRGLSDNRVVQVIDGVRQNFDLAHRGSYFLPMSLIQEIEVIKGPSSSLWGSGALGGVVAMRTPNALDLLKNNDKFGVKIRQGYQTANNLSERDVSVFAANDKFDVLISGFYNNADNLRTGKGNKLNNTAYKQFGGLAKFGWQINDANRVELSHRETRFKQTAPSNNEVENELTNEQITDQIREFHKPNNGSPPKAKPSQEEFYSGVKTRFGSVSYLTDQQIPDQSTVFNYYLTPDNPYLNTHIALYNNKTIEKEQRKVSGVKDQTKLTTRGINLRNSSELSHISFVYGVDYMRDKIRTERGTNNKDAQFRADPYNANSNTTGVYLIAHIPLFGEKLLLSPSVRYDHYDTSSKTVKYKDNHLSPATKLTWIVTNWLDFTAKYNEAFRAPSMQERFVSGSHFGTSILGRNEINKFVANPNLRPETAKNKEITANLHFDSLFKQGDKFKIEATYFRNDVKDFINLKIFNDAKTNTNASASAGAGAGANPNGALLPTKSQYQNITNARLSGIELQAQYQTERLTLFTNYGSTKGKDKDSGEALSNIAASKIGVGVNYALVKDKFTVGATVTHYAAQRRVPKDHSVTYPSYILTDLRATYAPLKGEWKNLRLDFALENLFDRKYQPAFSLMEGTGRNAKISAVYSF</sequence>
<name>HXUC2_HAEIF</name>
<reference key="1">
    <citation type="journal article" date="1995" name="J. Bacteriol.">
        <title>A gene cluster involved in the utilization of both free heme and heme:hemopexin by Haemophilus influenzae type b.</title>
        <authorList>
            <person name="Cope L.D."/>
            <person name="Yogev R."/>
            <person name="Mueller-Eberhard U."/>
            <person name="Hansen E.J."/>
        </authorList>
    </citation>
    <scope>NUCLEOTIDE SEQUENCE [GENOMIC DNA]</scope>
    <scope>FUNCTION</scope>
    <source>
        <strain>DL42 / Serotype B</strain>
    </source>
</reference>
<keyword id="KW-0998">Cell outer membrane</keyword>
<keyword id="KW-0472">Membrane</keyword>
<keyword id="KW-0732">Signal</keyword>
<keyword id="KW-0798">TonB box</keyword>
<keyword id="KW-0812">Transmembrane</keyword>
<keyword id="KW-1134">Transmembrane beta strand</keyword>
<keyword id="KW-0813">Transport</keyword>
<organism>
    <name type="scientific">Haemophilus influenzae</name>
    <dbReference type="NCBI Taxonomy" id="727"/>
    <lineage>
        <taxon>Bacteria</taxon>
        <taxon>Pseudomonadati</taxon>
        <taxon>Pseudomonadota</taxon>
        <taxon>Gammaproteobacteria</taxon>
        <taxon>Pasteurellales</taxon>
        <taxon>Pasteurellaceae</taxon>
        <taxon>Haemophilus</taxon>
    </lineage>
</organism>
<comment type="function">
    <text evidence="3">Required for utilization of free heme at low concentrations.</text>
</comment>
<comment type="subcellular location">
    <subcellularLocation>
        <location evidence="2">Cell outer membrane</location>
        <topology evidence="2">Multi-pass membrane protein</topology>
    </subcellularLocation>
</comment>
<comment type="similarity">
    <text evidence="4">Belongs to the TonB-dependent receptor family.</text>
</comment>
<proteinExistence type="inferred from homology"/>
<evidence type="ECO:0000255" key="1"/>
<evidence type="ECO:0000255" key="2">
    <source>
        <dbReference type="PROSITE-ProRule" id="PRU01360"/>
    </source>
</evidence>
<evidence type="ECO:0000269" key="3">
    <source>
    </source>
</evidence>
<evidence type="ECO:0000305" key="4"/>
<gene>
    <name type="primary">hxuC</name>
</gene>
<protein>
    <recommendedName>
        <fullName>Heme/hemopexin utilization protein C</fullName>
    </recommendedName>
</protein>